<evidence type="ECO:0000250" key="1"/>
<evidence type="ECO:0000255" key="2">
    <source>
        <dbReference type="HAMAP-Rule" id="MF_00100"/>
    </source>
</evidence>
<evidence type="ECO:0000256" key="3">
    <source>
        <dbReference type="SAM" id="MobiDB-lite"/>
    </source>
</evidence>
<accession>Q0AK69</accession>
<dbReference type="EMBL" id="CP000449">
    <property type="protein sequence ID" value="ABI67324.1"/>
    <property type="molecule type" value="Genomic_DNA"/>
</dbReference>
<dbReference type="RefSeq" id="WP_011644968.1">
    <property type="nucleotide sequence ID" value="NC_008347.1"/>
</dbReference>
<dbReference type="SMR" id="Q0AK69"/>
<dbReference type="STRING" id="394221.Mmar10_3043"/>
<dbReference type="KEGG" id="mmr:Mmar10_3043"/>
<dbReference type="eggNOG" id="COG0532">
    <property type="taxonomic scope" value="Bacteria"/>
</dbReference>
<dbReference type="HOGENOM" id="CLU_006301_10_1_5"/>
<dbReference type="OrthoDB" id="9811804at2"/>
<dbReference type="Proteomes" id="UP000001964">
    <property type="component" value="Chromosome"/>
</dbReference>
<dbReference type="GO" id="GO:0005829">
    <property type="term" value="C:cytosol"/>
    <property type="evidence" value="ECO:0007669"/>
    <property type="project" value="TreeGrafter"/>
</dbReference>
<dbReference type="GO" id="GO:0005525">
    <property type="term" value="F:GTP binding"/>
    <property type="evidence" value="ECO:0007669"/>
    <property type="project" value="UniProtKB-KW"/>
</dbReference>
<dbReference type="GO" id="GO:0003924">
    <property type="term" value="F:GTPase activity"/>
    <property type="evidence" value="ECO:0007669"/>
    <property type="project" value="UniProtKB-UniRule"/>
</dbReference>
<dbReference type="GO" id="GO:0097216">
    <property type="term" value="F:guanosine tetraphosphate binding"/>
    <property type="evidence" value="ECO:0007669"/>
    <property type="project" value="UniProtKB-ARBA"/>
</dbReference>
<dbReference type="GO" id="GO:0003743">
    <property type="term" value="F:translation initiation factor activity"/>
    <property type="evidence" value="ECO:0007669"/>
    <property type="project" value="UniProtKB-UniRule"/>
</dbReference>
<dbReference type="CDD" id="cd01887">
    <property type="entry name" value="IF2_eIF5B"/>
    <property type="match status" value="1"/>
</dbReference>
<dbReference type="CDD" id="cd03702">
    <property type="entry name" value="IF2_mtIF2_II"/>
    <property type="match status" value="1"/>
</dbReference>
<dbReference type="CDD" id="cd03692">
    <property type="entry name" value="mtIF2_IVc"/>
    <property type="match status" value="1"/>
</dbReference>
<dbReference type="FunFam" id="2.40.30.10:FF:000007">
    <property type="entry name" value="Translation initiation factor IF-2"/>
    <property type="match status" value="1"/>
</dbReference>
<dbReference type="FunFam" id="2.40.30.10:FF:000008">
    <property type="entry name" value="Translation initiation factor IF-2"/>
    <property type="match status" value="1"/>
</dbReference>
<dbReference type="FunFam" id="3.40.50.10050:FF:000001">
    <property type="entry name" value="Translation initiation factor IF-2"/>
    <property type="match status" value="1"/>
</dbReference>
<dbReference type="FunFam" id="3.40.50.300:FF:000019">
    <property type="entry name" value="Translation initiation factor IF-2"/>
    <property type="match status" value="1"/>
</dbReference>
<dbReference type="Gene3D" id="3.40.50.300">
    <property type="entry name" value="P-loop containing nucleotide triphosphate hydrolases"/>
    <property type="match status" value="1"/>
</dbReference>
<dbReference type="Gene3D" id="2.40.30.10">
    <property type="entry name" value="Translation factors"/>
    <property type="match status" value="2"/>
</dbReference>
<dbReference type="Gene3D" id="3.40.50.10050">
    <property type="entry name" value="Translation initiation factor IF- 2, domain 3"/>
    <property type="match status" value="1"/>
</dbReference>
<dbReference type="HAMAP" id="MF_00100_B">
    <property type="entry name" value="IF_2_B"/>
    <property type="match status" value="1"/>
</dbReference>
<dbReference type="InterPro" id="IPR053905">
    <property type="entry name" value="EF-G-like_DII"/>
</dbReference>
<dbReference type="InterPro" id="IPR004161">
    <property type="entry name" value="EFTu-like_2"/>
</dbReference>
<dbReference type="InterPro" id="IPR013575">
    <property type="entry name" value="IF2_assoc_dom_bac"/>
</dbReference>
<dbReference type="InterPro" id="IPR044145">
    <property type="entry name" value="IF2_II"/>
</dbReference>
<dbReference type="InterPro" id="IPR006847">
    <property type="entry name" value="IF2_N"/>
</dbReference>
<dbReference type="InterPro" id="IPR027417">
    <property type="entry name" value="P-loop_NTPase"/>
</dbReference>
<dbReference type="InterPro" id="IPR005225">
    <property type="entry name" value="Small_GTP-bd"/>
</dbReference>
<dbReference type="InterPro" id="IPR000795">
    <property type="entry name" value="T_Tr_GTP-bd_dom"/>
</dbReference>
<dbReference type="InterPro" id="IPR000178">
    <property type="entry name" value="TF_IF2_bacterial-like"/>
</dbReference>
<dbReference type="InterPro" id="IPR015760">
    <property type="entry name" value="TIF_IF2"/>
</dbReference>
<dbReference type="InterPro" id="IPR023115">
    <property type="entry name" value="TIF_IF2_dom3"/>
</dbReference>
<dbReference type="InterPro" id="IPR036925">
    <property type="entry name" value="TIF_IF2_dom3_sf"/>
</dbReference>
<dbReference type="InterPro" id="IPR009000">
    <property type="entry name" value="Transl_B-barrel_sf"/>
</dbReference>
<dbReference type="NCBIfam" id="TIGR00487">
    <property type="entry name" value="IF-2"/>
    <property type="match status" value="1"/>
</dbReference>
<dbReference type="NCBIfam" id="TIGR00231">
    <property type="entry name" value="small_GTP"/>
    <property type="match status" value="1"/>
</dbReference>
<dbReference type="PANTHER" id="PTHR43381:SF5">
    <property type="entry name" value="TR-TYPE G DOMAIN-CONTAINING PROTEIN"/>
    <property type="match status" value="1"/>
</dbReference>
<dbReference type="PANTHER" id="PTHR43381">
    <property type="entry name" value="TRANSLATION INITIATION FACTOR IF-2-RELATED"/>
    <property type="match status" value="1"/>
</dbReference>
<dbReference type="Pfam" id="PF22042">
    <property type="entry name" value="EF-G_D2"/>
    <property type="match status" value="1"/>
</dbReference>
<dbReference type="Pfam" id="PF00009">
    <property type="entry name" value="GTP_EFTU"/>
    <property type="match status" value="1"/>
</dbReference>
<dbReference type="Pfam" id="PF03144">
    <property type="entry name" value="GTP_EFTU_D2"/>
    <property type="match status" value="1"/>
</dbReference>
<dbReference type="Pfam" id="PF11987">
    <property type="entry name" value="IF-2"/>
    <property type="match status" value="1"/>
</dbReference>
<dbReference type="Pfam" id="PF08364">
    <property type="entry name" value="IF2_assoc"/>
    <property type="match status" value="1"/>
</dbReference>
<dbReference type="Pfam" id="PF04760">
    <property type="entry name" value="IF2_N"/>
    <property type="match status" value="1"/>
</dbReference>
<dbReference type="SUPFAM" id="SSF52156">
    <property type="entry name" value="Initiation factor IF2/eIF5b, domain 3"/>
    <property type="match status" value="1"/>
</dbReference>
<dbReference type="SUPFAM" id="SSF52540">
    <property type="entry name" value="P-loop containing nucleoside triphosphate hydrolases"/>
    <property type="match status" value="1"/>
</dbReference>
<dbReference type="SUPFAM" id="SSF50447">
    <property type="entry name" value="Translation proteins"/>
    <property type="match status" value="2"/>
</dbReference>
<dbReference type="PROSITE" id="PS51722">
    <property type="entry name" value="G_TR_2"/>
    <property type="match status" value="1"/>
</dbReference>
<dbReference type="PROSITE" id="PS01176">
    <property type="entry name" value="IF2"/>
    <property type="match status" value="1"/>
</dbReference>
<feature type="chain" id="PRO_1000008268" description="Translation initiation factor IF-2">
    <location>
        <begin position="1"/>
        <end position="861"/>
    </location>
</feature>
<feature type="domain" description="tr-type G">
    <location>
        <begin position="357"/>
        <end position="527"/>
    </location>
</feature>
<feature type="region of interest" description="Disordered" evidence="3">
    <location>
        <begin position="1"/>
        <end position="69"/>
    </location>
</feature>
<feature type="region of interest" description="Disordered" evidence="3">
    <location>
        <begin position="92"/>
        <end position="273"/>
    </location>
</feature>
<feature type="region of interest" description="G1" evidence="1">
    <location>
        <begin position="366"/>
        <end position="373"/>
    </location>
</feature>
<feature type="region of interest" description="G2" evidence="1">
    <location>
        <begin position="391"/>
        <end position="395"/>
    </location>
</feature>
<feature type="region of interest" description="G3" evidence="1">
    <location>
        <begin position="413"/>
        <end position="416"/>
    </location>
</feature>
<feature type="region of interest" description="G4" evidence="1">
    <location>
        <begin position="467"/>
        <end position="470"/>
    </location>
</feature>
<feature type="region of interest" description="G5" evidence="1">
    <location>
        <begin position="503"/>
        <end position="505"/>
    </location>
</feature>
<feature type="compositionally biased region" description="Gly residues" evidence="3">
    <location>
        <begin position="53"/>
        <end position="65"/>
    </location>
</feature>
<feature type="compositionally biased region" description="Basic and acidic residues" evidence="3">
    <location>
        <begin position="94"/>
        <end position="108"/>
    </location>
</feature>
<feature type="compositionally biased region" description="Low complexity" evidence="3">
    <location>
        <begin position="109"/>
        <end position="120"/>
    </location>
</feature>
<feature type="compositionally biased region" description="Basic and acidic residues" evidence="3">
    <location>
        <begin position="121"/>
        <end position="155"/>
    </location>
</feature>
<feature type="compositionally biased region" description="Basic and acidic residues" evidence="3">
    <location>
        <begin position="163"/>
        <end position="186"/>
    </location>
</feature>
<feature type="compositionally biased region" description="Low complexity" evidence="3">
    <location>
        <begin position="213"/>
        <end position="223"/>
    </location>
</feature>
<feature type="compositionally biased region" description="Basic and acidic residues" evidence="3">
    <location>
        <begin position="255"/>
        <end position="273"/>
    </location>
</feature>
<feature type="binding site" evidence="2">
    <location>
        <begin position="366"/>
        <end position="373"/>
    </location>
    <ligand>
        <name>GTP</name>
        <dbReference type="ChEBI" id="CHEBI:37565"/>
    </ligand>
</feature>
<feature type="binding site" evidence="2">
    <location>
        <begin position="413"/>
        <end position="417"/>
    </location>
    <ligand>
        <name>GTP</name>
        <dbReference type="ChEBI" id="CHEBI:37565"/>
    </ligand>
</feature>
<feature type="binding site" evidence="2">
    <location>
        <begin position="467"/>
        <end position="470"/>
    </location>
    <ligand>
        <name>GTP</name>
        <dbReference type="ChEBI" id="CHEBI:37565"/>
    </ligand>
</feature>
<gene>
    <name evidence="2" type="primary">infB</name>
    <name type="ordered locus">Mmar10_3043</name>
</gene>
<name>IF2_MARMM</name>
<reference key="1">
    <citation type="submission" date="2006-08" db="EMBL/GenBank/DDBJ databases">
        <title>Complete sequence of Maricaulis maris MCS10.</title>
        <authorList>
            <consortium name="US DOE Joint Genome Institute"/>
            <person name="Copeland A."/>
            <person name="Lucas S."/>
            <person name="Lapidus A."/>
            <person name="Barry K."/>
            <person name="Detter J.C."/>
            <person name="Glavina del Rio T."/>
            <person name="Hammon N."/>
            <person name="Israni S."/>
            <person name="Dalin E."/>
            <person name="Tice H."/>
            <person name="Pitluck S."/>
            <person name="Saunders E."/>
            <person name="Brettin T."/>
            <person name="Bruce D."/>
            <person name="Han C."/>
            <person name="Tapia R."/>
            <person name="Gilna P."/>
            <person name="Schmutz J."/>
            <person name="Larimer F."/>
            <person name="Land M."/>
            <person name="Hauser L."/>
            <person name="Kyrpides N."/>
            <person name="Mikhailova N."/>
            <person name="Viollier P."/>
            <person name="Stephens C."/>
            <person name="Richardson P."/>
        </authorList>
    </citation>
    <scope>NUCLEOTIDE SEQUENCE [LARGE SCALE GENOMIC DNA]</scope>
    <source>
        <strain>MCS10</strain>
    </source>
</reference>
<keyword id="KW-0963">Cytoplasm</keyword>
<keyword id="KW-0342">GTP-binding</keyword>
<keyword id="KW-0396">Initiation factor</keyword>
<keyword id="KW-0547">Nucleotide-binding</keyword>
<keyword id="KW-0648">Protein biosynthesis</keyword>
<keyword id="KW-1185">Reference proteome</keyword>
<organism>
    <name type="scientific">Maricaulis maris (strain MCS10)</name>
    <name type="common">Caulobacter maris</name>
    <dbReference type="NCBI Taxonomy" id="394221"/>
    <lineage>
        <taxon>Bacteria</taxon>
        <taxon>Pseudomonadati</taxon>
        <taxon>Pseudomonadota</taxon>
        <taxon>Alphaproteobacteria</taxon>
        <taxon>Maricaulales</taxon>
        <taxon>Maricaulaceae</taxon>
        <taxon>Maricaulis</taxon>
    </lineage>
</organism>
<comment type="function">
    <text evidence="2">One of the essential components for the initiation of protein synthesis. Protects formylmethionyl-tRNA from spontaneous hydrolysis and promotes its binding to the 30S ribosomal subunits. Also involved in the hydrolysis of GTP during the formation of the 70S ribosomal complex.</text>
</comment>
<comment type="subcellular location">
    <subcellularLocation>
        <location evidence="2">Cytoplasm</location>
    </subcellularLocation>
</comment>
<comment type="similarity">
    <text evidence="2">Belongs to the TRAFAC class translation factor GTPase superfamily. Classic translation factor GTPase family. IF-2 subfamily.</text>
</comment>
<protein>
    <recommendedName>
        <fullName evidence="2">Translation initiation factor IF-2</fullName>
    </recommendedName>
</protein>
<sequence>MSDADDNNSSGRRPLSLKRSGGGTVQQSFARGRSKAVVVEKKRKRVATPAKDGGPGGKQGGGAKGGESALAAKARQLGLSEEELVARQRAIARARAEAADREAQKKQDAAAMAQRAASEQRQLEEQRERVAREAREAEEAAQKAIEDEARLKAEAEAATAAKDSGRKRDDESSRRRPPAKDEKRTPEVVPMDEASALEALGGRVKRKGGAAGPGPAAKQQPARAKTDNRRRGKLTIQNILEGDEERQRSLASVRRAREREKQRRQDTSGGREKIEREVVVPEAITVADLANRMAERSVDVIKYMMKQGQMVRMNDVLDADTAELVVEDFGHIVKRVSEADVEQGFIDDDDADEAKLPRAPVIAVMGHVDHGKTSLLDALRSTDIASGEAGGITQHIGAYQVELKGGQKITFLDTPGHAAFSAMRSRGAMATDIVILVVAADDSVKPQTIEAIHHAKAAGTPIIVAVNKCDKHEANPQKVLTDLLQHEIVVEAMSGEVQSVNVSAKTREGLDELTEAIALQAELLDLKANPERSAEGIVIESQVDKGRGPVATLLVRRGTLKRGEIVVAGAQWGRVRALVDARGQQLPEAGPSLAVEILGLDGAPDPGELFAVVDSESRAREIADYRQRKGREATGGSSPASASLEQMMARLKQDETQEMPLLVKSDVQGSAEAIKQSLEGIGNDEVRARIIRAAPGGVNESDVLLAKSSGAPVFAFNVRANKQARELAEREGVEIRYYSVIYDVIDDVRNTMEGMLAPEKRENFIGYAEILEVFNITKTGKVAGCRVTEGVVRRGCGVRLLRDDTVLHEGKLKTLKRFKDEVSDVRAGTECGMAFEKYEDLRKGDQIECFEVIEVARKLEA</sequence>
<proteinExistence type="inferred from homology"/>